<accession>P64310</accession>
<accession>Q97NX3</accession>
<dbReference type="EC" id="3.6.1.66" evidence="1"/>
<dbReference type="EMBL" id="AE005672">
    <property type="protein sequence ID" value="AAK75952.1"/>
    <property type="molecule type" value="Genomic_DNA"/>
</dbReference>
<dbReference type="PIR" id="G95219">
    <property type="entry name" value="G95219"/>
</dbReference>
<dbReference type="SMR" id="P64310"/>
<dbReference type="PaxDb" id="170187-SP_1880"/>
<dbReference type="EnsemblBacteria" id="AAK75952">
    <property type="protein sequence ID" value="AAK75952"/>
    <property type="gene ID" value="SP_1880"/>
</dbReference>
<dbReference type="KEGG" id="spn:SP_1880"/>
<dbReference type="eggNOG" id="COG0127">
    <property type="taxonomic scope" value="Bacteria"/>
</dbReference>
<dbReference type="PhylomeDB" id="P64310"/>
<dbReference type="Proteomes" id="UP000000585">
    <property type="component" value="Chromosome"/>
</dbReference>
<dbReference type="GO" id="GO:0005829">
    <property type="term" value="C:cytosol"/>
    <property type="evidence" value="ECO:0007669"/>
    <property type="project" value="TreeGrafter"/>
</dbReference>
<dbReference type="GO" id="GO:0035870">
    <property type="term" value="F:dITP diphosphatase activity"/>
    <property type="evidence" value="ECO:0007669"/>
    <property type="project" value="RHEA"/>
</dbReference>
<dbReference type="GO" id="GO:0036220">
    <property type="term" value="F:ITP diphosphatase activity"/>
    <property type="evidence" value="ECO:0007669"/>
    <property type="project" value="UniProtKB-EC"/>
</dbReference>
<dbReference type="GO" id="GO:0046872">
    <property type="term" value="F:metal ion binding"/>
    <property type="evidence" value="ECO:0007669"/>
    <property type="project" value="UniProtKB-KW"/>
</dbReference>
<dbReference type="GO" id="GO:0000166">
    <property type="term" value="F:nucleotide binding"/>
    <property type="evidence" value="ECO:0007669"/>
    <property type="project" value="UniProtKB-KW"/>
</dbReference>
<dbReference type="GO" id="GO:0017111">
    <property type="term" value="F:ribonucleoside triphosphate phosphatase activity"/>
    <property type="evidence" value="ECO:0007669"/>
    <property type="project" value="InterPro"/>
</dbReference>
<dbReference type="GO" id="GO:0036222">
    <property type="term" value="F:XTP diphosphatase activity"/>
    <property type="evidence" value="ECO:0007669"/>
    <property type="project" value="RHEA"/>
</dbReference>
<dbReference type="GO" id="GO:0009117">
    <property type="term" value="P:nucleotide metabolic process"/>
    <property type="evidence" value="ECO:0007669"/>
    <property type="project" value="UniProtKB-KW"/>
</dbReference>
<dbReference type="GO" id="GO:0009146">
    <property type="term" value="P:purine nucleoside triphosphate catabolic process"/>
    <property type="evidence" value="ECO:0007669"/>
    <property type="project" value="UniProtKB-UniRule"/>
</dbReference>
<dbReference type="CDD" id="cd00515">
    <property type="entry name" value="HAM1"/>
    <property type="match status" value="1"/>
</dbReference>
<dbReference type="FunFam" id="3.90.950.10:FF:000001">
    <property type="entry name" value="dITP/XTP pyrophosphatase"/>
    <property type="match status" value="1"/>
</dbReference>
<dbReference type="Gene3D" id="3.90.950.10">
    <property type="match status" value="1"/>
</dbReference>
<dbReference type="HAMAP" id="MF_01405">
    <property type="entry name" value="Non_canon_purine_NTPase"/>
    <property type="match status" value="1"/>
</dbReference>
<dbReference type="InterPro" id="IPR020922">
    <property type="entry name" value="dITP/XTP_pyrophosphatase"/>
</dbReference>
<dbReference type="InterPro" id="IPR029001">
    <property type="entry name" value="ITPase-like_fam"/>
</dbReference>
<dbReference type="InterPro" id="IPR002637">
    <property type="entry name" value="RdgB/HAM1"/>
</dbReference>
<dbReference type="NCBIfam" id="NF002698">
    <property type="entry name" value="PRK02491.1"/>
    <property type="match status" value="1"/>
</dbReference>
<dbReference type="NCBIfam" id="NF011397">
    <property type="entry name" value="PRK14822.1"/>
    <property type="match status" value="1"/>
</dbReference>
<dbReference type="NCBIfam" id="TIGR00042">
    <property type="entry name" value="RdgB/HAM1 family non-canonical purine NTP pyrophosphatase"/>
    <property type="match status" value="1"/>
</dbReference>
<dbReference type="PANTHER" id="PTHR11067:SF9">
    <property type="entry name" value="INOSINE TRIPHOSPHATE PYROPHOSPHATASE"/>
    <property type="match status" value="1"/>
</dbReference>
<dbReference type="PANTHER" id="PTHR11067">
    <property type="entry name" value="INOSINE TRIPHOSPHATE PYROPHOSPHATASE/HAM1 PROTEIN"/>
    <property type="match status" value="1"/>
</dbReference>
<dbReference type="Pfam" id="PF01725">
    <property type="entry name" value="Ham1p_like"/>
    <property type="match status" value="1"/>
</dbReference>
<dbReference type="SUPFAM" id="SSF52972">
    <property type="entry name" value="ITPase-like"/>
    <property type="match status" value="1"/>
</dbReference>
<feature type="chain" id="PRO_0000178240" description="dITP/XTP pyrophosphatase">
    <location>
        <begin position="1"/>
        <end position="200"/>
    </location>
</feature>
<feature type="active site" description="Proton acceptor" evidence="1">
    <location>
        <position position="67"/>
    </location>
</feature>
<feature type="binding site" evidence="1">
    <location>
        <begin position="5"/>
        <end position="10"/>
    </location>
    <ligand>
        <name>substrate</name>
    </ligand>
</feature>
<feature type="binding site" evidence="1">
    <location>
        <position position="67"/>
    </location>
    <ligand>
        <name>Mg(2+)</name>
        <dbReference type="ChEBI" id="CHEBI:18420"/>
    </ligand>
</feature>
<feature type="binding site" evidence="1">
    <location>
        <position position="68"/>
    </location>
    <ligand>
        <name>substrate</name>
    </ligand>
</feature>
<feature type="binding site" evidence="1">
    <location>
        <begin position="151"/>
        <end position="154"/>
    </location>
    <ligand>
        <name>substrate</name>
    </ligand>
</feature>
<feature type="binding site" evidence="1">
    <location>
        <position position="174"/>
    </location>
    <ligand>
        <name>substrate</name>
    </ligand>
</feature>
<feature type="binding site" evidence="1">
    <location>
        <begin position="179"/>
        <end position="180"/>
    </location>
    <ligand>
        <name>substrate</name>
    </ligand>
</feature>
<protein>
    <recommendedName>
        <fullName evidence="1">dITP/XTP pyrophosphatase</fullName>
        <ecNumber evidence="1">3.6.1.66</ecNumber>
    </recommendedName>
    <alternativeName>
        <fullName evidence="1">Non-canonical purine NTP pyrophosphatase</fullName>
    </alternativeName>
    <alternativeName>
        <fullName evidence="1">Non-standard purine NTP pyrophosphatase</fullName>
    </alternativeName>
    <alternativeName>
        <fullName evidence="1">Nucleoside-triphosphate diphosphatase</fullName>
    </alternativeName>
    <alternativeName>
        <fullName evidence="1">Nucleoside-triphosphate pyrophosphatase</fullName>
        <shortName evidence="1">NTPase</shortName>
    </alternativeName>
</protein>
<keyword id="KW-0378">Hydrolase</keyword>
<keyword id="KW-0460">Magnesium</keyword>
<keyword id="KW-0479">Metal-binding</keyword>
<keyword id="KW-0546">Nucleotide metabolism</keyword>
<keyword id="KW-0547">Nucleotide-binding</keyword>
<keyword id="KW-1185">Reference proteome</keyword>
<gene>
    <name type="ordered locus">SP_1880</name>
</gene>
<proteinExistence type="inferred from homology"/>
<organism>
    <name type="scientific">Streptococcus pneumoniae serotype 4 (strain ATCC BAA-334 / TIGR4)</name>
    <dbReference type="NCBI Taxonomy" id="170187"/>
    <lineage>
        <taxon>Bacteria</taxon>
        <taxon>Bacillati</taxon>
        <taxon>Bacillota</taxon>
        <taxon>Bacilli</taxon>
        <taxon>Lactobacillales</taxon>
        <taxon>Streptococcaceae</taxon>
        <taxon>Streptococcus</taxon>
    </lineage>
</organism>
<comment type="function">
    <text evidence="1">Pyrophosphatase that catalyzes the hydrolysis of nucleoside triphosphates to their monophosphate derivatives, with a high preference for the non-canonical purine nucleotides XTP (xanthosine triphosphate), dITP (deoxyinosine triphosphate) and ITP. Seems to function as a house-cleaning enzyme that removes non-canonical purine nucleotides from the nucleotide pool, thus preventing their incorporation into DNA/RNA and avoiding chromosomal lesions.</text>
</comment>
<comment type="catalytic activity">
    <reaction evidence="1">
        <text>XTP + H2O = XMP + diphosphate + H(+)</text>
        <dbReference type="Rhea" id="RHEA:28610"/>
        <dbReference type="ChEBI" id="CHEBI:15377"/>
        <dbReference type="ChEBI" id="CHEBI:15378"/>
        <dbReference type="ChEBI" id="CHEBI:33019"/>
        <dbReference type="ChEBI" id="CHEBI:57464"/>
        <dbReference type="ChEBI" id="CHEBI:61314"/>
        <dbReference type="EC" id="3.6.1.66"/>
    </reaction>
</comment>
<comment type="catalytic activity">
    <reaction evidence="1">
        <text>dITP + H2O = dIMP + diphosphate + H(+)</text>
        <dbReference type="Rhea" id="RHEA:28342"/>
        <dbReference type="ChEBI" id="CHEBI:15377"/>
        <dbReference type="ChEBI" id="CHEBI:15378"/>
        <dbReference type="ChEBI" id="CHEBI:33019"/>
        <dbReference type="ChEBI" id="CHEBI:61194"/>
        <dbReference type="ChEBI" id="CHEBI:61382"/>
        <dbReference type="EC" id="3.6.1.66"/>
    </reaction>
</comment>
<comment type="catalytic activity">
    <reaction evidence="1">
        <text>ITP + H2O = IMP + diphosphate + H(+)</text>
        <dbReference type="Rhea" id="RHEA:29399"/>
        <dbReference type="ChEBI" id="CHEBI:15377"/>
        <dbReference type="ChEBI" id="CHEBI:15378"/>
        <dbReference type="ChEBI" id="CHEBI:33019"/>
        <dbReference type="ChEBI" id="CHEBI:58053"/>
        <dbReference type="ChEBI" id="CHEBI:61402"/>
        <dbReference type="EC" id="3.6.1.66"/>
    </reaction>
</comment>
<comment type="cofactor">
    <cofactor evidence="1">
        <name>Mg(2+)</name>
        <dbReference type="ChEBI" id="CHEBI:18420"/>
    </cofactor>
    <text evidence="1">Binds 1 Mg(2+) ion per subunit.</text>
</comment>
<comment type="subunit">
    <text evidence="1">Homodimer.</text>
</comment>
<comment type="similarity">
    <text evidence="1">Belongs to the HAM1 NTPase family.</text>
</comment>
<reference key="1">
    <citation type="journal article" date="2001" name="Science">
        <title>Complete genome sequence of a virulent isolate of Streptococcus pneumoniae.</title>
        <authorList>
            <person name="Tettelin H."/>
            <person name="Nelson K.E."/>
            <person name="Paulsen I.T."/>
            <person name="Eisen J.A."/>
            <person name="Read T.D."/>
            <person name="Peterson S.N."/>
            <person name="Heidelberg J.F."/>
            <person name="DeBoy R.T."/>
            <person name="Haft D.H."/>
            <person name="Dodson R.J."/>
            <person name="Durkin A.S."/>
            <person name="Gwinn M.L."/>
            <person name="Kolonay J.F."/>
            <person name="Nelson W.C."/>
            <person name="Peterson J.D."/>
            <person name="Umayam L.A."/>
            <person name="White O."/>
            <person name="Salzberg S.L."/>
            <person name="Lewis M.R."/>
            <person name="Radune D."/>
            <person name="Holtzapple E.K."/>
            <person name="Khouri H.M."/>
            <person name="Wolf A.M."/>
            <person name="Utterback T.R."/>
            <person name="Hansen C.L."/>
            <person name="McDonald L.A."/>
            <person name="Feldblyum T.V."/>
            <person name="Angiuoli S.V."/>
            <person name="Dickinson T."/>
            <person name="Hickey E.K."/>
            <person name="Holt I.E."/>
            <person name="Loftus B.J."/>
            <person name="Yang F."/>
            <person name="Smith H.O."/>
            <person name="Venter J.C."/>
            <person name="Dougherty B.A."/>
            <person name="Morrison D.A."/>
            <person name="Hollingshead S.K."/>
            <person name="Fraser C.M."/>
        </authorList>
    </citation>
    <scope>NUCLEOTIDE SEQUENCE [LARGE SCALE GENOMIC DNA]</scope>
    <source>
        <strain>ATCC BAA-334 / TIGR4</strain>
    </source>
</reference>
<evidence type="ECO:0000255" key="1">
    <source>
        <dbReference type="HAMAP-Rule" id="MF_01405"/>
    </source>
</evidence>
<name>IXTPA_STRPN</name>
<sequence>MLIATRNEGKTKEFRAIFDKLGYDVENLNDYPDLPEVAETGMTFEENARLKAETISQLTGKMVLADDSGLKVDVLGGLPGVWSARFAGVGATDRENNAKLLHELAMVFELKDRSAQFHTTLVVASPNKESLVVEADWSGYINFEPKGENGFGYDPLFLVGETGESSAELTLEEKNSQSHRALAVKKLLEVFPSWQSKPSL</sequence>